<gene>
    <name type="primary">CRC</name>
    <name type="synonym">CRU1</name>
    <name type="synonym">CRU3</name>
    <name type="ordered locus">At4g28520</name>
    <name type="ORF">F20O9.210</name>
</gene>
<sequence>MVKLSNLLVATFGVLLVLNGCLARQSLGVPPQLQNECNLDNLDVLQATETIKSEAGQIEYWDHNHPQLRCVGVSVARYVIEQGGLYLPTFFTSPKISYVVQGTGISGRVVPGCAETFMDSQPMQGQQQGQPWQGRQGQQGQPWEGQGQQGQQGRQGQPWEGQGQQGQQGRQGQQGQPWEGQGQQGQQGFRDMHQKVEHVRRGDVFANTPGSAHWIYNSGEQPLVIIALLDIANYQNQLDRNPRVFHLAGNNQQGGFGGSQQQQEQKNLWSGFDAQVIAQALKIDVQLAQQLQNQQDSRGNIVRVKGPFQVVRPPLRQPYESEEWRHPRSPQGNGLEETICSMRSHENIDDPARADVYKPSLGRVTSVNSYTLPILEYVRLSATRGVLQGNAMVLPKYNMNANEILYCTGGQGRIQVVNDNGQNVLDQQVQKGQLVVIPQGFAYVVQSHGNKFEWISFKTNENAMISTLAGRTSLLRALPLEVISNGFQISPEEARKIKFNTLETTLTRAAGRQQQQLIEEIVEA</sequence>
<name>CRU3_ARATH</name>
<evidence type="ECO:0000250" key="1"/>
<evidence type="ECO:0000255" key="2"/>
<evidence type="ECO:0000256" key="3">
    <source>
        <dbReference type="SAM" id="MobiDB-lite"/>
    </source>
</evidence>
<evidence type="ECO:0000269" key="4">
    <source>
    </source>
</evidence>
<evidence type="ECO:0000269" key="5">
    <source>
    </source>
</evidence>
<evidence type="ECO:0000269" key="6">
    <source>
    </source>
</evidence>
<evidence type="ECO:0000269" key="7">
    <source>
    </source>
</evidence>
<evidence type="ECO:0000269" key="8">
    <source>
    </source>
</evidence>
<evidence type="ECO:0000269" key="9">
    <source>
    </source>
</evidence>
<evidence type="ECO:0000269" key="10">
    <source>
    </source>
</evidence>
<evidence type="ECO:0000269" key="11">
    <source>
    </source>
</evidence>
<evidence type="ECO:0000269" key="12">
    <source ref="10"/>
</evidence>
<evidence type="ECO:0000303" key="13">
    <source>
    </source>
</evidence>
<evidence type="ECO:0000305" key="14"/>
<organism>
    <name type="scientific">Arabidopsis thaliana</name>
    <name type="common">Mouse-ear cress</name>
    <dbReference type="NCBI Taxonomy" id="3702"/>
    <lineage>
        <taxon>Eukaryota</taxon>
        <taxon>Viridiplantae</taxon>
        <taxon>Streptophyta</taxon>
        <taxon>Embryophyta</taxon>
        <taxon>Tracheophyta</taxon>
        <taxon>Spermatophyta</taxon>
        <taxon>Magnoliopsida</taxon>
        <taxon>eudicotyledons</taxon>
        <taxon>Gunneridae</taxon>
        <taxon>Pentapetalae</taxon>
        <taxon>rosids</taxon>
        <taxon>malvids</taxon>
        <taxon>Brassicales</taxon>
        <taxon>Brassicaceae</taxon>
        <taxon>Camelineae</taxon>
        <taxon>Arabidopsis</taxon>
    </lineage>
</organism>
<feature type="signal peptide" evidence="5">
    <location>
        <begin position="1"/>
        <end position="23"/>
    </location>
</feature>
<feature type="chain" id="PRO_0000399923" description="12S seed storage protein CRC alpha chain">
    <location>
        <begin position="24"/>
        <end position="333"/>
    </location>
</feature>
<feature type="chain" id="PRO_0000399924" description="12S seed storage protein CRC beta chain">
    <location>
        <begin position="334"/>
        <end position="524"/>
    </location>
</feature>
<feature type="domain" description="Cupin type-1 1" evidence="2">
    <location>
        <begin position="42"/>
        <end position="289"/>
    </location>
</feature>
<feature type="domain" description="Cupin type-1 2" evidence="2">
    <location>
        <begin position="346"/>
        <end position="495"/>
    </location>
</feature>
<feature type="region of interest" description="Disordered" evidence="3">
    <location>
        <begin position="119"/>
        <end position="190"/>
    </location>
</feature>
<feature type="compositionally biased region" description="Low complexity" evidence="3">
    <location>
        <begin position="124"/>
        <end position="188"/>
    </location>
</feature>
<feature type="modified residue" description="Phosphoserine" evidence="8">
    <location>
        <position position="53"/>
    </location>
</feature>
<feature type="modified residue" description="Phosphotyrosine" evidence="8">
    <location>
        <position position="78"/>
    </location>
</feature>
<feature type="modified residue" description="Phosphoserine" evidence="8">
    <location>
        <position position="97"/>
    </location>
</feature>
<feature type="modified residue" description="Phosphothreonine" evidence="8">
    <location>
        <position position="116"/>
    </location>
</feature>
<feature type="modified residue" description="Phosphoserine" evidence="8">
    <location>
        <position position="259"/>
    </location>
</feature>
<feature type="modified residue" description="Phosphoserine" evidence="8">
    <location>
        <position position="366"/>
    </location>
</feature>
<feature type="modified residue" description="Phosphothreonine" evidence="8">
    <location>
        <position position="459"/>
    </location>
</feature>
<feature type="modified residue" description="Phosphoserine" evidence="8">
    <location>
        <position position="484"/>
    </location>
</feature>
<feature type="modified residue" description="Phosphothreonine" evidence="8">
    <location>
        <position position="501"/>
    </location>
</feature>
<feature type="disulfide bond" evidence="1">
    <location>
        <begin position="37"/>
        <end position="70"/>
    </location>
</feature>
<feature type="disulfide bond" description="Interchain (between alpha and beta chains)" evidence="2">
    <location>
        <begin position="113"/>
        <end position="340"/>
    </location>
</feature>
<feature type="splice variant" id="VSP_039933" description="In isoform 2." evidence="13">
    <original>VFANTPGSAHWIYNSGEQ</original>
    <variation>GIAIGGHIKWFPDLSRGS</variation>
    <location>
        <begin position="204"/>
        <end position="221"/>
    </location>
</feature>
<feature type="splice variant" id="VSP_039934" description="In isoform 2." evidence="13">
    <location>
        <begin position="222"/>
        <end position="524"/>
    </location>
</feature>
<feature type="splice variant" id="VSP_039935" description="In isoform 4." evidence="14">
    <original>GNAMVL</original>
    <variation>ECDGAS</variation>
    <location>
        <begin position="389"/>
        <end position="394"/>
    </location>
</feature>
<feature type="splice variant" id="VSP_039936" description="In isoform 3." evidence="14">
    <original>NAMVLPK</original>
    <variation>VKCDGAS</variation>
    <location>
        <begin position="390"/>
        <end position="396"/>
    </location>
</feature>
<feature type="splice variant" id="VSP_039937" description="In isoform 4." evidence="14">
    <location>
        <begin position="395"/>
        <end position="524"/>
    </location>
</feature>
<feature type="splice variant" id="VSP_039938" description="In isoform 3." evidence="14">
    <location>
        <begin position="397"/>
        <end position="524"/>
    </location>
</feature>
<feature type="sequence variant" description="In strain: cv. Mr-0." evidence="7">
    <location>
        <begin position="141"/>
        <end position="153"/>
    </location>
</feature>
<feature type="sequence variant" description="In strain: cv. Mr-0." evidence="7">
    <original>R</original>
    <variation>Q</variation>
    <location>
        <position position="170"/>
    </location>
</feature>
<feature type="sequence conflict" description="In Ref. 6; CAA79027." evidence="14" ref="6">
    <original>C</original>
    <variation>S</variation>
    <location>
        <position position="21"/>
    </location>
</feature>
<feature type="sequence conflict" description="In Ref. 5; AAL91248/AAN72284." evidence="14" ref="5">
    <original>Q</original>
    <variation>H</variation>
    <location>
        <position position="174"/>
    </location>
</feature>
<feature type="sequence conflict" description="In Ref. 7; BAH56848." evidence="14" ref="7">
    <original>G</original>
    <variation>V</variation>
    <location sequence="Q96318-2">
        <position position="204"/>
    </location>
</feature>
<accession>Q96318</accession>
<accession>A8MRV6</accession>
<accession>C0Z2B9</accession>
<accession>Q41905</accession>
<accession>Q41913</accession>
<accession>Q42181</accession>
<accession>Q56YY3</accession>
<accession>Q8RX74</accession>
<dbReference type="EMBL" id="U66916">
    <property type="protein sequence ID" value="AAB17379.1"/>
    <property type="molecule type" value="Genomic_DNA"/>
</dbReference>
<dbReference type="EMBL" id="AL021749">
    <property type="protein sequence ID" value="CAA16892.1"/>
    <property type="molecule type" value="Genomic_DNA"/>
</dbReference>
<dbReference type="EMBL" id="AL161573">
    <property type="protein sequence ID" value="CAB81440.1"/>
    <property type="molecule type" value="Genomic_DNA"/>
</dbReference>
<dbReference type="EMBL" id="CP002687">
    <property type="protein sequence ID" value="AEE85497.1"/>
    <property type="molecule type" value="Genomic_DNA"/>
</dbReference>
<dbReference type="EMBL" id="CP002687">
    <property type="protein sequence ID" value="AEE85498.1"/>
    <property type="molecule type" value="Genomic_DNA"/>
</dbReference>
<dbReference type="EMBL" id="CP002687">
    <property type="protein sequence ID" value="AEE85500.1"/>
    <property type="molecule type" value="Genomic_DNA"/>
</dbReference>
<dbReference type="EMBL" id="AY090342">
    <property type="protein sequence ID" value="AAL91248.1"/>
    <property type="molecule type" value="mRNA"/>
</dbReference>
<dbReference type="EMBL" id="BT002273">
    <property type="protein sequence ID" value="AAN72284.1"/>
    <property type="molecule type" value="mRNA"/>
</dbReference>
<dbReference type="EMBL" id="Z17659">
    <property type="protein sequence ID" value="CAA79027.1"/>
    <property type="molecule type" value="mRNA"/>
</dbReference>
<dbReference type="EMBL" id="Z17616">
    <property type="protein sequence ID" value="CAA79014.1"/>
    <property type="molecule type" value="mRNA"/>
</dbReference>
<dbReference type="EMBL" id="Z27261">
    <property type="protein sequence ID" value="CAA81772.1"/>
    <property type="molecule type" value="mRNA"/>
</dbReference>
<dbReference type="EMBL" id="AK318733">
    <property type="protein sequence ID" value="BAH56848.1"/>
    <property type="status" value="ALT_INIT"/>
    <property type="molecule type" value="mRNA"/>
</dbReference>
<dbReference type="EMBL" id="AK221187">
    <property type="protein sequence ID" value="BAD95275.1"/>
    <property type="status" value="ALT_INIT"/>
    <property type="molecule type" value="mRNA"/>
</dbReference>
<dbReference type="PIR" id="T04623">
    <property type="entry name" value="T04623"/>
</dbReference>
<dbReference type="RefSeq" id="NP_001078459.1">
    <molecule id="Q96318-3"/>
    <property type="nucleotide sequence ID" value="NM_001084990.1"/>
</dbReference>
<dbReference type="RefSeq" id="NP_194581.1">
    <molecule id="Q96318-1"/>
    <property type="nucleotide sequence ID" value="NM_118994.4"/>
</dbReference>
<dbReference type="RefSeq" id="NP_849464.1">
    <molecule id="Q96318-4"/>
    <property type="nucleotide sequence ID" value="NM_179133.2"/>
</dbReference>
<dbReference type="SMR" id="Q96318"/>
<dbReference type="BioGRID" id="14257">
    <property type="interactions" value="4"/>
</dbReference>
<dbReference type="FunCoup" id="Q96318">
    <property type="interactions" value="188"/>
</dbReference>
<dbReference type="STRING" id="3702.Q96318"/>
<dbReference type="iPTMnet" id="Q96318"/>
<dbReference type="PaxDb" id="3702-AT4G28520.1"/>
<dbReference type="EnsemblPlants" id="AT4G28520.1">
    <molecule id="Q96318-1"/>
    <property type="protein sequence ID" value="AT4G28520.1"/>
    <property type="gene ID" value="AT4G28520"/>
</dbReference>
<dbReference type="EnsemblPlants" id="AT4G28520.2">
    <molecule id="Q96318-4"/>
    <property type="protein sequence ID" value="AT4G28520.2"/>
    <property type="gene ID" value="AT4G28520"/>
</dbReference>
<dbReference type="EnsemblPlants" id="AT4G28520.4">
    <molecule id="Q96318-3"/>
    <property type="protein sequence ID" value="AT4G28520.4"/>
    <property type="gene ID" value="AT4G28520"/>
</dbReference>
<dbReference type="GeneID" id="828970"/>
<dbReference type="Gramene" id="AT4G28520.1">
    <molecule id="Q96318-1"/>
    <property type="protein sequence ID" value="AT4G28520.1"/>
    <property type="gene ID" value="AT4G28520"/>
</dbReference>
<dbReference type="Gramene" id="AT4G28520.2">
    <molecule id="Q96318-4"/>
    <property type="protein sequence ID" value="AT4G28520.2"/>
    <property type="gene ID" value="AT4G28520"/>
</dbReference>
<dbReference type="Gramene" id="AT4G28520.4">
    <molecule id="Q96318-3"/>
    <property type="protein sequence ID" value="AT4G28520.4"/>
    <property type="gene ID" value="AT4G28520"/>
</dbReference>
<dbReference type="KEGG" id="ath:AT4G28520"/>
<dbReference type="Araport" id="AT4G28520"/>
<dbReference type="TAIR" id="AT4G28520">
    <property type="gene designation" value="CRU3"/>
</dbReference>
<dbReference type="eggNOG" id="ENOG502QU1J">
    <property type="taxonomic scope" value="Eukaryota"/>
</dbReference>
<dbReference type="InParanoid" id="Q96318"/>
<dbReference type="OMA" id="DEAVCLM"/>
<dbReference type="OrthoDB" id="2016041at2759"/>
<dbReference type="PhylomeDB" id="Q96318"/>
<dbReference type="PRO" id="PR:Q96318"/>
<dbReference type="Proteomes" id="UP000006548">
    <property type="component" value="Chromosome 4"/>
</dbReference>
<dbReference type="ExpressionAtlas" id="Q96318">
    <property type="expression patterns" value="baseline and differential"/>
</dbReference>
<dbReference type="GO" id="GO:0000326">
    <property type="term" value="C:protein storage vacuole"/>
    <property type="evidence" value="ECO:0007669"/>
    <property type="project" value="UniProtKB-SubCell"/>
</dbReference>
<dbReference type="GO" id="GO:0045735">
    <property type="term" value="F:nutrient reservoir activity"/>
    <property type="evidence" value="ECO:0000314"/>
    <property type="project" value="UniProtKB"/>
</dbReference>
<dbReference type="GO" id="GO:0071215">
    <property type="term" value="P:cellular response to abscisic acid stimulus"/>
    <property type="evidence" value="ECO:0000314"/>
    <property type="project" value="UniProtKB"/>
</dbReference>
<dbReference type="GO" id="GO:0009737">
    <property type="term" value="P:response to abscisic acid"/>
    <property type="evidence" value="ECO:0000270"/>
    <property type="project" value="TAIR"/>
</dbReference>
<dbReference type="GO" id="GO:0010431">
    <property type="term" value="P:seed maturation"/>
    <property type="evidence" value="ECO:0000314"/>
    <property type="project" value="UniProtKB"/>
</dbReference>
<dbReference type="CDD" id="cd02243">
    <property type="entry name" value="cupin_11S_legumin_C"/>
    <property type="match status" value="1"/>
</dbReference>
<dbReference type="CDD" id="cd02242">
    <property type="entry name" value="cupin_11S_legumin_N"/>
    <property type="match status" value="1"/>
</dbReference>
<dbReference type="FunFam" id="2.60.120.10:FF:000385">
    <property type="entry name" value="Cruciferin 3"/>
    <property type="match status" value="1"/>
</dbReference>
<dbReference type="FunFam" id="2.60.120.10:FF:000073">
    <property type="entry name" value="Glycinin G1"/>
    <property type="match status" value="1"/>
</dbReference>
<dbReference type="FunFam" id="2.60.120.10:FF:000439">
    <property type="entry name" value="Seed storage protein"/>
    <property type="match status" value="1"/>
</dbReference>
<dbReference type="Gene3D" id="2.60.120.10">
    <property type="entry name" value="Jelly Rolls"/>
    <property type="match status" value="3"/>
</dbReference>
<dbReference type="InterPro" id="IPR022379">
    <property type="entry name" value="11S_seedstore_CS"/>
</dbReference>
<dbReference type="InterPro" id="IPR006044">
    <property type="entry name" value="11S_seedstore_pln"/>
</dbReference>
<dbReference type="InterPro" id="IPR006045">
    <property type="entry name" value="Cupin_1"/>
</dbReference>
<dbReference type="InterPro" id="IPR014710">
    <property type="entry name" value="RmlC-like_jellyroll"/>
</dbReference>
<dbReference type="InterPro" id="IPR011051">
    <property type="entry name" value="RmlC_Cupin_sf"/>
</dbReference>
<dbReference type="InterPro" id="IPR050253">
    <property type="entry name" value="Seed_Storage-Functional"/>
</dbReference>
<dbReference type="PANTHER" id="PTHR31189:SF74">
    <property type="entry name" value="12S SEED STORAGE PROTEIN CRC"/>
    <property type="match status" value="1"/>
</dbReference>
<dbReference type="PANTHER" id="PTHR31189">
    <property type="entry name" value="OS03G0336100 PROTEIN-RELATED"/>
    <property type="match status" value="1"/>
</dbReference>
<dbReference type="Pfam" id="PF00190">
    <property type="entry name" value="Cupin_1"/>
    <property type="match status" value="2"/>
</dbReference>
<dbReference type="PRINTS" id="PR00439">
    <property type="entry name" value="11SGLOBULIN"/>
</dbReference>
<dbReference type="SMART" id="SM00835">
    <property type="entry name" value="Cupin_1"/>
    <property type="match status" value="2"/>
</dbReference>
<dbReference type="SUPFAM" id="SSF51182">
    <property type="entry name" value="RmlC-like cupins"/>
    <property type="match status" value="1"/>
</dbReference>
<dbReference type="PROSITE" id="PS00305">
    <property type="entry name" value="11S_SEED_STORAGE"/>
    <property type="match status" value="1"/>
</dbReference>
<protein>
    <recommendedName>
        <fullName>12S seed storage protein CRC</fullName>
    </recommendedName>
    <alternativeName>
        <fullName>Cruciferin 3</fullName>
        <shortName>AtCRU3</shortName>
    </alternativeName>
    <alternativeName>
        <fullName>Cruciferin C</fullName>
    </alternativeName>
    <alternativeName>
        <fullName>Legumin-type globulin Cruciferin1</fullName>
    </alternativeName>
    <alternativeName>
        <fullName>Legumin-type globulin storage protein CRU1</fullName>
    </alternativeName>
    <component>
        <recommendedName>
            <fullName>12S seed storage protein CRC alpha chain</fullName>
        </recommendedName>
        <alternativeName>
            <fullName>12S seed storage protein CRC acidic chain</fullName>
        </alternativeName>
    </component>
    <component>
        <recommendedName>
            <fullName>12S seed storage protein CRC beta chain</fullName>
        </recommendedName>
        <alternativeName>
            <fullName>12S seed storage protein CRC basic chain</fullName>
        </alternativeName>
    </component>
</protein>
<comment type="function">
    <text>Seed storage protein.</text>
</comment>
<comment type="subunit">
    <text evidence="1">Hexamer; each subunit is composed of an acidic and a basic chain derived from a single precursor and linked by a disulfide bond.</text>
</comment>
<comment type="subcellular location">
    <subcellularLocation>
        <location evidence="14">Protein storage vacuole</location>
    </subcellularLocation>
</comment>
<comment type="alternative products">
    <event type="alternative splicing"/>
    <isoform>
        <id>Q96318-1</id>
        <name>1</name>
        <sequence type="displayed"/>
    </isoform>
    <isoform>
        <id>Q96318-2</id>
        <name>2</name>
        <sequence type="described" ref="VSP_039933 VSP_039934"/>
    </isoform>
    <isoform>
        <id>Q96318-3</id>
        <name>3</name>
        <sequence type="described" ref="VSP_039936 VSP_039938"/>
    </isoform>
    <isoform>
        <id>Q96318-4</id>
        <name>4</name>
        <sequence type="described" ref="VSP_039935 VSP_039937"/>
    </isoform>
</comment>
<comment type="tissue specificity">
    <text evidence="4 9">Accumulates in seeds 8 days after anthesis.</text>
</comment>
<comment type="developmental stage">
    <text evidence="9 11 12">Detected in siliques at nucleotide level from 6 days post anthesis (dpa) to 17 dpa. First observed in siliques at protein level 12 dpa and accumulates progressively as native isoforms or proteolytic fragments during the last week of seed maturation/desiccation. Present in dry seeds, but disappears during their germination (at protein level).</text>
</comment>
<comment type="induction">
    <text evidence="6 11">By abscisic acid (ABA) in an ABI3- and FUS3-dependent manner.</text>
</comment>
<comment type="PTM">
    <text>Proteolytically processed during seed maturation at a conserved Asn-Gly peptide bond by an asparaginyl endopeptidase to produce two mature polypeptides referred to as alpha and beta subunits that are joined together by a disulfide bond.</text>
</comment>
<comment type="PTM">
    <text evidence="8 10">Phosphorylated in seeds on some Tyr residues in response to abscisic acid (ABA).</text>
</comment>
<comment type="similarity">
    <text evidence="14">Belongs to the 11S seed storage protein (globulins) family.</text>
</comment>
<comment type="sequence caution" evidence="14">
    <conflict type="erroneous initiation">
        <sequence resource="EMBL-CDS" id="BAD95275"/>
    </conflict>
    <text>Truncated N-terminus.</text>
</comment>
<comment type="sequence caution" evidence="14">
    <conflict type="erroneous initiation">
        <sequence resource="EMBL-CDS" id="BAH56848"/>
    </conflict>
    <text>Truncated N-terminus.</text>
</comment>
<proteinExistence type="evidence at protein level"/>
<keyword id="KW-0025">Alternative splicing</keyword>
<keyword id="KW-0903">Direct protein sequencing</keyword>
<keyword id="KW-1015">Disulfide bond</keyword>
<keyword id="KW-0597">Phosphoprotein</keyword>
<keyword id="KW-1185">Reference proteome</keyword>
<keyword id="KW-0708">Seed storage protein</keyword>
<keyword id="KW-0732">Signal</keyword>
<keyword id="KW-0758">Storage protein</keyword>
<keyword id="KW-0926">Vacuole</keyword>
<reference key="1">
    <citation type="journal article" date="2005" name="Planta">
        <title>Two naturally occurring deletion mutants of 12S seed storage proteins in Arabidopsis thaliana.</title>
        <authorList>
            <person name="Hou A."/>
            <person name="Liu K."/>
            <person name="Catawatcharakul N."/>
            <person name="Tang X."/>
            <person name="Nguyen V."/>
            <person name="Keller W.A."/>
            <person name="Tsang E.W."/>
            <person name="Cui Y."/>
        </authorList>
    </citation>
    <scope>NUCLEOTIDE SEQUENCE [GENOMIC DNA]</scope>
    <scope>IDENTIFICATION BY MASS SPECTROMETRY</scope>
    <scope>VARIANTS 141-GLN--GLY-153 DEL AND GLN-170</scope>
    <source>
        <strain>cv. Columbia</strain>
        <strain>cv. Mr-0</strain>
    </source>
</reference>
<reference key="2">
    <citation type="submission" date="1996-08" db="EMBL/GenBank/DDBJ databases">
        <title>Characterization of a cruciferin-deficient mutant of Arabidopsis.</title>
        <authorList>
            <person name="McCourt P."/>
            <person name="Ferraioli G."/>
            <person name="Riggs C.D."/>
        </authorList>
    </citation>
    <scope>NUCLEOTIDE SEQUENCE [GENOMIC DNA]</scope>
</reference>
<reference key="3">
    <citation type="journal article" date="1999" name="Nature">
        <title>Sequence and analysis of chromosome 4 of the plant Arabidopsis thaliana.</title>
        <authorList>
            <person name="Mayer K.F.X."/>
            <person name="Schueller C."/>
            <person name="Wambutt R."/>
            <person name="Murphy G."/>
            <person name="Volckaert G."/>
            <person name="Pohl T."/>
            <person name="Duesterhoeft A."/>
            <person name="Stiekema W."/>
            <person name="Entian K.-D."/>
            <person name="Terryn N."/>
            <person name="Harris B."/>
            <person name="Ansorge W."/>
            <person name="Brandt P."/>
            <person name="Grivell L.A."/>
            <person name="Rieger M."/>
            <person name="Weichselgartner M."/>
            <person name="de Simone V."/>
            <person name="Obermaier B."/>
            <person name="Mache R."/>
            <person name="Mueller M."/>
            <person name="Kreis M."/>
            <person name="Delseny M."/>
            <person name="Puigdomenech P."/>
            <person name="Watson M."/>
            <person name="Schmidtheini T."/>
            <person name="Reichert B."/>
            <person name="Portetelle D."/>
            <person name="Perez-Alonso M."/>
            <person name="Boutry M."/>
            <person name="Bancroft I."/>
            <person name="Vos P."/>
            <person name="Hoheisel J."/>
            <person name="Zimmermann W."/>
            <person name="Wedler H."/>
            <person name="Ridley P."/>
            <person name="Langham S.-A."/>
            <person name="McCullagh B."/>
            <person name="Bilham L."/>
            <person name="Robben J."/>
            <person name="van der Schueren J."/>
            <person name="Grymonprez B."/>
            <person name="Chuang Y.-J."/>
            <person name="Vandenbussche F."/>
            <person name="Braeken M."/>
            <person name="Weltjens I."/>
            <person name="Voet M."/>
            <person name="Bastiaens I."/>
            <person name="Aert R."/>
            <person name="Defoor E."/>
            <person name="Weitzenegger T."/>
            <person name="Bothe G."/>
            <person name="Ramsperger U."/>
            <person name="Hilbert H."/>
            <person name="Braun M."/>
            <person name="Holzer E."/>
            <person name="Brandt A."/>
            <person name="Peters S."/>
            <person name="van Staveren M."/>
            <person name="Dirkse W."/>
            <person name="Mooijman P."/>
            <person name="Klein Lankhorst R."/>
            <person name="Rose M."/>
            <person name="Hauf J."/>
            <person name="Koetter P."/>
            <person name="Berneiser S."/>
            <person name="Hempel S."/>
            <person name="Feldpausch M."/>
            <person name="Lamberth S."/>
            <person name="Van den Daele H."/>
            <person name="De Keyser A."/>
            <person name="Buysshaert C."/>
            <person name="Gielen J."/>
            <person name="Villarroel R."/>
            <person name="De Clercq R."/>
            <person name="van Montagu M."/>
            <person name="Rogers J."/>
            <person name="Cronin A."/>
            <person name="Quail M.A."/>
            <person name="Bray-Allen S."/>
            <person name="Clark L."/>
            <person name="Doggett J."/>
            <person name="Hall S."/>
            <person name="Kay M."/>
            <person name="Lennard N."/>
            <person name="McLay K."/>
            <person name="Mayes R."/>
            <person name="Pettett A."/>
            <person name="Rajandream M.A."/>
            <person name="Lyne M."/>
            <person name="Benes V."/>
            <person name="Rechmann S."/>
            <person name="Borkova D."/>
            <person name="Bloecker H."/>
            <person name="Scharfe M."/>
            <person name="Grimm M."/>
            <person name="Loehnert T.-H."/>
            <person name="Dose S."/>
            <person name="de Haan M."/>
            <person name="Maarse A.C."/>
            <person name="Schaefer M."/>
            <person name="Mueller-Auer S."/>
            <person name="Gabel C."/>
            <person name="Fuchs M."/>
            <person name="Fartmann B."/>
            <person name="Granderath K."/>
            <person name="Dauner D."/>
            <person name="Herzl A."/>
            <person name="Neumann S."/>
            <person name="Argiriou A."/>
            <person name="Vitale D."/>
            <person name="Liguori R."/>
            <person name="Piravandi E."/>
            <person name="Massenet O."/>
            <person name="Quigley F."/>
            <person name="Clabauld G."/>
            <person name="Muendlein A."/>
            <person name="Felber R."/>
            <person name="Schnabl S."/>
            <person name="Hiller R."/>
            <person name="Schmidt W."/>
            <person name="Lecharny A."/>
            <person name="Aubourg S."/>
            <person name="Chefdor F."/>
            <person name="Cooke R."/>
            <person name="Berger C."/>
            <person name="Monfort A."/>
            <person name="Casacuberta E."/>
            <person name="Gibbons T."/>
            <person name="Weber N."/>
            <person name="Vandenbol M."/>
            <person name="Bargues M."/>
            <person name="Terol J."/>
            <person name="Torres A."/>
            <person name="Perez-Perez A."/>
            <person name="Purnelle B."/>
            <person name="Bent E."/>
            <person name="Johnson S."/>
            <person name="Tacon D."/>
            <person name="Jesse T."/>
            <person name="Heijnen L."/>
            <person name="Schwarz S."/>
            <person name="Scholler P."/>
            <person name="Heber S."/>
            <person name="Francs P."/>
            <person name="Bielke C."/>
            <person name="Frishman D."/>
            <person name="Haase D."/>
            <person name="Lemcke K."/>
            <person name="Mewes H.-W."/>
            <person name="Stocker S."/>
            <person name="Zaccaria P."/>
            <person name="Bevan M."/>
            <person name="Wilson R.K."/>
            <person name="de la Bastide M."/>
            <person name="Habermann K."/>
            <person name="Parnell L."/>
            <person name="Dedhia N."/>
            <person name="Gnoj L."/>
            <person name="Schutz K."/>
            <person name="Huang E."/>
            <person name="Spiegel L."/>
            <person name="Sekhon M."/>
            <person name="Murray J."/>
            <person name="Sheet P."/>
            <person name="Cordes M."/>
            <person name="Abu-Threideh J."/>
            <person name="Stoneking T."/>
            <person name="Kalicki J."/>
            <person name="Graves T."/>
            <person name="Harmon G."/>
            <person name="Edwards J."/>
            <person name="Latreille P."/>
            <person name="Courtney L."/>
            <person name="Cloud J."/>
            <person name="Abbott A."/>
            <person name="Scott K."/>
            <person name="Johnson D."/>
            <person name="Minx P."/>
            <person name="Bentley D."/>
            <person name="Fulton B."/>
            <person name="Miller N."/>
            <person name="Greco T."/>
            <person name="Kemp K."/>
            <person name="Kramer J."/>
            <person name="Fulton L."/>
            <person name="Mardis E."/>
            <person name="Dante M."/>
            <person name="Pepin K."/>
            <person name="Hillier L.W."/>
            <person name="Nelson J."/>
            <person name="Spieth J."/>
            <person name="Ryan E."/>
            <person name="Andrews S."/>
            <person name="Geisel C."/>
            <person name="Layman D."/>
            <person name="Du H."/>
            <person name="Ali J."/>
            <person name="Berghoff A."/>
            <person name="Jones K."/>
            <person name="Drone K."/>
            <person name="Cotton M."/>
            <person name="Joshu C."/>
            <person name="Antonoiu B."/>
            <person name="Zidanic M."/>
            <person name="Strong C."/>
            <person name="Sun H."/>
            <person name="Lamar B."/>
            <person name="Yordan C."/>
            <person name="Ma P."/>
            <person name="Zhong J."/>
            <person name="Preston R."/>
            <person name="Vil D."/>
            <person name="Shekher M."/>
            <person name="Matero A."/>
            <person name="Shah R."/>
            <person name="Swaby I.K."/>
            <person name="O'Shaughnessy A."/>
            <person name="Rodriguez M."/>
            <person name="Hoffman J."/>
            <person name="Till S."/>
            <person name="Granat S."/>
            <person name="Shohdy N."/>
            <person name="Hasegawa A."/>
            <person name="Hameed A."/>
            <person name="Lodhi M."/>
            <person name="Johnson A."/>
            <person name="Chen E."/>
            <person name="Marra M.A."/>
            <person name="Martienssen R."/>
            <person name="McCombie W.R."/>
        </authorList>
    </citation>
    <scope>NUCLEOTIDE SEQUENCE [LARGE SCALE GENOMIC DNA]</scope>
    <source>
        <strain>cv. Columbia</strain>
    </source>
</reference>
<reference key="4">
    <citation type="journal article" date="2017" name="Plant J.">
        <title>Araport11: a complete reannotation of the Arabidopsis thaliana reference genome.</title>
        <authorList>
            <person name="Cheng C.Y."/>
            <person name="Krishnakumar V."/>
            <person name="Chan A.P."/>
            <person name="Thibaud-Nissen F."/>
            <person name="Schobel S."/>
            <person name="Town C.D."/>
        </authorList>
    </citation>
    <scope>GENOME REANNOTATION</scope>
    <source>
        <strain>cv. Columbia</strain>
    </source>
</reference>
<reference key="5">
    <citation type="journal article" date="2003" name="Science">
        <title>Empirical analysis of transcriptional activity in the Arabidopsis genome.</title>
        <authorList>
            <person name="Yamada K."/>
            <person name="Lim J."/>
            <person name="Dale J.M."/>
            <person name="Chen H."/>
            <person name="Shinn P."/>
            <person name="Palm C.J."/>
            <person name="Southwick A.M."/>
            <person name="Wu H.C."/>
            <person name="Kim C.J."/>
            <person name="Nguyen M."/>
            <person name="Pham P.K."/>
            <person name="Cheuk R.F."/>
            <person name="Karlin-Newmann G."/>
            <person name="Liu S.X."/>
            <person name="Lam B."/>
            <person name="Sakano H."/>
            <person name="Wu T."/>
            <person name="Yu G."/>
            <person name="Miranda M."/>
            <person name="Quach H.L."/>
            <person name="Tripp M."/>
            <person name="Chang C.H."/>
            <person name="Lee J.M."/>
            <person name="Toriumi M.J."/>
            <person name="Chan M.M."/>
            <person name="Tang C.C."/>
            <person name="Onodera C.S."/>
            <person name="Deng J.M."/>
            <person name="Akiyama K."/>
            <person name="Ansari Y."/>
            <person name="Arakawa T."/>
            <person name="Banh J."/>
            <person name="Banno F."/>
            <person name="Bowser L."/>
            <person name="Brooks S.Y."/>
            <person name="Carninci P."/>
            <person name="Chao Q."/>
            <person name="Choy N."/>
            <person name="Enju A."/>
            <person name="Goldsmith A.D."/>
            <person name="Gurjal M."/>
            <person name="Hansen N.F."/>
            <person name="Hayashizaki Y."/>
            <person name="Johnson-Hopson C."/>
            <person name="Hsuan V.W."/>
            <person name="Iida K."/>
            <person name="Karnes M."/>
            <person name="Khan S."/>
            <person name="Koesema E."/>
            <person name="Ishida J."/>
            <person name="Jiang P.X."/>
            <person name="Jones T."/>
            <person name="Kawai J."/>
            <person name="Kamiya A."/>
            <person name="Meyers C."/>
            <person name="Nakajima M."/>
            <person name="Narusaka M."/>
            <person name="Seki M."/>
            <person name="Sakurai T."/>
            <person name="Satou M."/>
            <person name="Tamse R."/>
            <person name="Vaysberg M."/>
            <person name="Wallender E.K."/>
            <person name="Wong C."/>
            <person name="Yamamura Y."/>
            <person name="Yuan S."/>
            <person name="Shinozaki K."/>
            <person name="Davis R.W."/>
            <person name="Theologis A."/>
            <person name="Ecker J.R."/>
        </authorList>
    </citation>
    <scope>NUCLEOTIDE SEQUENCE [LARGE SCALE MRNA] (ISOFORM 1)</scope>
    <source>
        <strain>cv. Columbia</strain>
    </source>
</reference>
<reference key="6">
    <citation type="submission" date="1993-11" db="EMBL/GenBank/DDBJ databases">
        <title>The Arabidopsis thaliana transcribed genome: the GDR cDNA program.</title>
        <authorList>
            <person name="Raynal M."/>
            <person name="Grellet F."/>
            <person name="Laudie M."/>
            <person name="Meyer Y."/>
            <person name="Cooke R."/>
            <person name="Delseny M."/>
        </authorList>
    </citation>
    <scope>NUCLEOTIDE SEQUENCE [LARGE SCALE MRNA] OF 1-154; 227-341 AND 431-524 (ISOFORM 1)</scope>
    <source>
        <strain>cv. Columbia</strain>
        <tissue>Seed</tissue>
        <tissue>Silique</tissue>
    </source>
</reference>
<reference key="7">
    <citation type="journal article" date="2009" name="DNA Res.">
        <title>Analysis of multiple occurrences of alternative splicing events in Arabidopsis thaliana using novel sequenced full-length cDNAs.</title>
        <authorList>
            <person name="Iida K."/>
            <person name="Fukami-Kobayashi K."/>
            <person name="Toyoda A."/>
            <person name="Sakaki Y."/>
            <person name="Kobayashi M."/>
            <person name="Seki M."/>
            <person name="Shinozaki K."/>
        </authorList>
    </citation>
    <scope>NUCLEOTIDE SEQUENCE [LARGE SCALE MRNA] OF 79-221 (ISOFORM 2)</scope>
    <source>
        <strain>cv. Columbia</strain>
        <tissue>Flower</tissue>
        <tissue>Silique</tissue>
    </source>
</reference>
<reference key="8">
    <citation type="journal article" date="2004" name="Plant Cell">
        <title>Storage protein accumulation in the absence of the vacuolar processing enzyme family of cysteine proteases.</title>
        <authorList>
            <person name="Gruis D."/>
            <person name="Schulze J."/>
            <person name="Jung R."/>
        </authorList>
    </citation>
    <scope>PROTEIN SEQUENCE OF 24-33 AND 323-331</scope>
    <scope>PROTEIN SEQUENCE OF N-TERMINUS</scope>
    <scope>PROTEOLYSIS</scope>
</reference>
<reference key="9">
    <citation type="submission" date="2005-03" db="EMBL/GenBank/DDBJ databases">
        <title>Large-scale analysis of RIKEN Arabidopsis full-length (RAFL) cDNAs.</title>
        <authorList>
            <person name="Totoki Y."/>
            <person name="Seki M."/>
            <person name="Ishida J."/>
            <person name="Nakajima M."/>
            <person name="Enju A."/>
            <person name="Kamiya A."/>
            <person name="Narusaka M."/>
            <person name="Shin-i T."/>
            <person name="Nakagawa M."/>
            <person name="Sakamoto N."/>
            <person name="Oishi K."/>
            <person name="Kohara Y."/>
            <person name="Kobayashi M."/>
            <person name="Toyoda A."/>
            <person name="Sakaki Y."/>
            <person name="Sakurai T."/>
            <person name="Iida K."/>
            <person name="Akiyama K."/>
            <person name="Satou M."/>
            <person name="Toyoda T."/>
            <person name="Konagaya A."/>
            <person name="Carninci P."/>
            <person name="Kawai J."/>
            <person name="Hayashizaki Y."/>
            <person name="Shinozaki K."/>
        </authorList>
    </citation>
    <scope>NUCLEOTIDE SEQUENCE [LARGE SCALE MRNA] OF 385-524 (ISOFORM 1)</scope>
    <source>
        <strain>cv. Columbia</strain>
    </source>
</reference>
<reference key="10">
    <citation type="journal article" date="1988" name="Plant Mol. Biol.">
        <title>Molecular cloning, genomic organization, expression and evolution of 12S seed storage protein.</title>
        <authorList>
            <person name="Pang P.P."/>
            <person name="Pruitt R.E."/>
            <person name="Meyerowitz E.M."/>
        </authorList>
    </citation>
    <scope>DEVELOPMENTAL STAGE</scope>
</reference>
<reference key="11">
    <citation type="journal article" date="1994" name="Plant Cell">
        <title>Regulation of gene expression programs during Arabidopsis seed development: roles of the ABI3 locus and of endogenous abscisic acid.</title>
        <authorList>
            <person name="Parcy F."/>
            <person name="Valon C."/>
            <person name="Raynal M."/>
            <person name="Gaubier-Comella P."/>
            <person name="Delseny M."/>
            <person name="Giraudat J."/>
        </authorList>
    </citation>
    <scope>DEVELOPMENTAL STAGE</scope>
    <scope>INDUCTION BY ABSCISIC ACID</scope>
</reference>
<reference key="12">
    <citation type="journal article" date="2002" name="Plant Cell">
        <title>Redundant proteolytic mechanisms process seed storage proteins in the absence of seed-type members of the vacuolar processing enzyme family of cysteine proteases.</title>
        <authorList>
            <person name="Gruis D.F."/>
            <person name="Selinger D.A."/>
            <person name="Curran J.M."/>
            <person name="Jung R."/>
        </authorList>
    </citation>
    <scope>IDENTIFICATION BY MASS SPECTROMETRY</scope>
    <scope>TISSUE SPECIFICITY</scope>
</reference>
<reference key="13">
    <citation type="journal article" date="2005" name="Plant Cell Physiol.">
        <title>Indirect ABA-dependent regulation of seed storage protein genes by FUSCA3 transcription factor in Arabidopsis.</title>
        <authorList>
            <person name="Kagaya Y."/>
            <person name="Okuda R."/>
            <person name="Ban A."/>
            <person name="Toyoshima R."/>
            <person name="Tsutsumida K."/>
            <person name="Usui H."/>
            <person name="Yamamoto A."/>
            <person name="Hattori T."/>
        </authorList>
    </citation>
    <scope>INDUCTION BY ABSCISIC ACID</scope>
</reference>
<reference key="14">
    <citation type="journal article" date="2007" name="Biochem. J.">
        <title>Phosphorylation of the 12 S globulin cruciferin in wild-type and abi1-1 mutant Arabidopsis thaliana (thale cress) seeds.</title>
        <authorList>
            <person name="Wan L."/>
            <person name="Ross A.R."/>
            <person name="Yang J."/>
            <person name="Hegedus D.D."/>
            <person name="Kermode A.R."/>
        </authorList>
    </citation>
    <scope>IDENTIFICATION BY MASS SPECTROMETRY</scope>
    <scope>PHOSPHORYLATION AT SER-53; TYR-78; SER-97; THR-116; SER-259; SER-366; THR-459; SER-484 AND THR-501</scope>
    <scope>NOMENCLATURE</scope>
</reference>
<reference key="15">
    <citation type="journal article" date="2007" name="J. Biochem. Mol. Biol.">
        <title>Systematic studies of 12S seed storage protein accumulation and degradation patterns during Arabidopsis seed maturation and early seedling germination stages.</title>
        <authorList>
            <person name="Li Q."/>
            <person name="Wang B.-C."/>
            <person name="Xu Y."/>
            <person name="Zhu Y.-X."/>
        </authorList>
    </citation>
    <scope>PROTEOLYSIS</scope>
    <scope>DEVELOPMENTAL STAGE</scope>
    <scope>TISSUE SPECIFICITY</scope>
</reference>
<reference key="16">
    <citation type="journal article" date="2008" name="Plant Physiol.">
        <title>Protein tyrosine kinases and protein tyrosine phosphatases are involved in abscisic acid-dependent processes in Arabidopsis seeds and suspension cells.</title>
        <authorList>
            <person name="Ghelis T."/>
            <person name="Bolbach G."/>
            <person name="Clodic G."/>
            <person name="Habricot Y."/>
            <person name="Miginiac E."/>
            <person name="Sotta B."/>
            <person name="Jeannette E."/>
        </authorList>
    </citation>
    <scope>IDENTIFICATION BY MASS SPECTROMETRY</scope>
    <scope>PHOSPHORYLATION</scope>
</reference>
<reference key="17">
    <citation type="journal article" date="2009" name="J. Proteomics">
        <title>Phosphoproteomic analysis of nuclei-enriched fractions from Arabidopsis thaliana.</title>
        <authorList>
            <person name="Jones A.M.E."/>
            <person name="MacLean D."/>
            <person name="Studholme D.J."/>
            <person name="Serna-Sanz A."/>
            <person name="Andreasson E."/>
            <person name="Rathjen J.P."/>
            <person name="Peck S.C."/>
        </authorList>
    </citation>
    <scope>IDENTIFICATION BY MASS SPECTROMETRY [LARGE SCALE ANALYSIS]</scope>
    <source>
        <strain>cv. Columbia</strain>
    </source>
</reference>